<keyword id="KW-0678">Repressor</keyword>
<keyword id="KW-0687">Ribonucleoprotein</keyword>
<keyword id="KW-0689">Ribosomal protein</keyword>
<keyword id="KW-0694">RNA-binding</keyword>
<keyword id="KW-0699">rRNA-binding</keyword>
<keyword id="KW-0810">Translation regulation</keyword>
<keyword id="KW-0820">tRNA-binding</keyword>
<protein>
    <recommendedName>
        <fullName evidence="1">Large ribosomal subunit protein uL1</fullName>
    </recommendedName>
    <alternativeName>
        <fullName evidence="2">50S ribosomal protein L1</fullName>
    </alternativeName>
</protein>
<evidence type="ECO:0000255" key="1">
    <source>
        <dbReference type="HAMAP-Rule" id="MF_01318"/>
    </source>
</evidence>
<evidence type="ECO:0000305" key="2"/>
<comment type="function">
    <text evidence="1">Binds directly to 23S rRNA. The L1 stalk is quite mobile in the ribosome, and is involved in E site tRNA release.</text>
</comment>
<comment type="function">
    <text evidence="1">Protein L1 is also a translational repressor protein, it controls the translation of the L11 operon by binding to its mRNA.</text>
</comment>
<comment type="subunit">
    <text evidence="1">Part of the 50S ribosomal subunit.</text>
</comment>
<comment type="similarity">
    <text evidence="1">Belongs to the universal ribosomal protein uL1 family.</text>
</comment>
<feature type="chain" id="PRO_1000141360" description="Large ribosomal subunit protein uL1">
    <location>
        <begin position="1"/>
        <end position="230"/>
    </location>
</feature>
<gene>
    <name evidence="1" type="primary">rplA</name>
    <name type="ordered locus">BCAH187_A0128</name>
</gene>
<proteinExistence type="inferred from homology"/>
<sequence>MAKRGKKYVEAAKLVDRAAAYSATEAVELVKKTNTAKFDATVEAAFRLGVDPKKADQQIRGAVVLPHGTGKVQRVLVFAKGEKAKEAEAAGADFVGDADYIGKIQQGWFDFDVVVATPDMMGEVGKLGRVLGPKGLMPNPKTGTVTFDVTKAVNEIKAGKVEYRVDKAGNIHVPIGKVSFEDAKLVENFRTIADTLQKVKPAAAKGTYMKNVTVASTMGPGVRVDVSTLA</sequence>
<dbReference type="EMBL" id="CP001177">
    <property type="protein sequence ID" value="ACJ80090.1"/>
    <property type="molecule type" value="Genomic_DNA"/>
</dbReference>
<dbReference type="SMR" id="B7HQT2"/>
<dbReference type="KEGG" id="bcr:BCAH187_A0128"/>
<dbReference type="HOGENOM" id="CLU_062853_0_0_9"/>
<dbReference type="Proteomes" id="UP000002214">
    <property type="component" value="Chromosome"/>
</dbReference>
<dbReference type="GO" id="GO:0015934">
    <property type="term" value="C:large ribosomal subunit"/>
    <property type="evidence" value="ECO:0007669"/>
    <property type="project" value="InterPro"/>
</dbReference>
<dbReference type="GO" id="GO:0019843">
    <property type="term" value="F:rRNA binding"/>
    <property type="evidence" value="ECO:0007669"/>
    <property type="project" value="UniProtKB-UniRule"/>
</dbReference>
<dbReference type="GO" id="GO:0003735">
    <property type="term" value="F:structural constituent of ribosome"/>
    <property type="evidence" value="ECO:0007669"/>
    <property type="project" value="InterPro"/>
</dbReference>
<dbReference type="GO" id="GO:0000049">
    <property type="term" value="F:tRNA binding"/>
    <property type="evidence" value="ECO:0007669"/>
    <property type="project" value="UniProtKB-KW"/>
</dbReference>
<dbReference type="GO" id="GO:0006417">
    <property type="term" value="P:regulation of translation"/>
    <property type="evidence" value="ECO:0007669"/>
    <property type="project" value="UniProtKB-KW"/>
</dbReference>
<dbReference type="GO" id="GO:0006412">
    <property type="term" value="P:translation"/>
    <property type="evidence" value="ECO:0007669"/>
    <property type="project" value="UniProtKB-UniRule"/>
</dbReference>
<dbReference type="CDD" id="cd00403">
    <property type="entry name" value="Ribosomal_L1"/>
    <property type="match status" value="1"/>
</dbReference>
<dbReference type="FunFam" id="3.40.50.790:FF:000001">
    <property type="entry name" value="50S ribosomal protein L1"/>
    <property type="match status" value="1"/>
</dbReference>
<dbReference type="Gene3D" id="3.30.190.20">
    <property type="match status" value="1"/>
</dbReference>
<dbReference type="Gene3D" id="3.40.50.790">
    <property type="match status" value="1"/>
</dbReference>
<dbReference type="HAMAP" id="MF_01318_B">
    <property type="entry name" value="Ribosomal_uL1_B"/>
    <property type="match status" value="1"/>
</dbReference>
<dbReference type="InterPro" id="IPR005878">
    <property type="entry name" value="Ribosom_uL1_bac-type"/>
</dbReference>
<dbReference type="InterPro" id="IPR002143">
    <property type="entry name" value="Ribosomal_uL1"/>
</dbReference>
<dbReference type="InterPro" id="IPR023674">
    <property type="entry name" value="Ribosomal_uL1-like"/>
</dbReference>
<dbReference type="InterPro" id="IPR028364">
    <property type="entry name" value="Ribosomal_uL1/biogenesis"/>
</dbReference>
<dbReference type="InterPro" id="IPR016095">
    <property type="entry name" value="Ribosomal_uL1_3-a/b-sand"/>
</dbReference>
<dbReference type="InterPro" id="IPR023673">
    <property type="entry name" value="Ribosomal_uL1_CS"/>
</dbReference>
<dbReference type="NCBIfam" id="TIGR01169">
    <property type="entry name" value="rplA_bact"/>
    <property type="match status" value="1"/>
</dbReference>
<dbReference type="PANTHER" id="PTHR36427">
    <property type="entry name" value="54S RIBOSOMAL PROTEIN L1, MITOCHONDRIAL"/>
    <property type="match status" value="1"/>
</dbReference>
<dbReference type="PANTHER" id="PTHR36427:SF3">
    <property type="entry name" value="LARGE RIBOSOMAL SUBUNIT PROTEIN UL1M"/>
    <property type="match status" value="1"/>
</dbReference>
<dbReference type="Pfam" id="PF00687">
    <property type="entry name" value="Ribosomal_L1"/>
    <property type="match status" value="1"/>
</dbReference>
<dbReference type="PIRSF" id="PIRSF002155">
    <property type="entry name" value="Ribosomal_L1"/>
    <property type="match status" value="1"/>
</dbReference>
<dbReference type="SUPFAM" id="SSF56808">
    <property type="entry name" value="Ribosomal protein L1"/>
    <property type="match status" value="1"/>
</dbReference>
<dbReference type="PROSITE" id="PS01199">
    <property type="entry name" value="RIBOSOMAL_L1"/>
    <property type="match status" value="1"/>
</dbReference>
<name>RL1_BACC7</name>
<organism>
    <name type="scientific">Bacillus cereus (strain AH187)</name>
    <dbReference type="NCBI Taxonomy" id="405534"/>
    <lineage>
        <taxon>Bacteria</taxon>
        <taxon>Bacillati</taxon>
        <taxon>Bacillota</taxon>
        <taxon>Bacilli</taxon>
        <taxon>Bacillales</taxon>
        <taxon>Bacillaceae</taxon>
        <taxon>Bacillus</taxon>
        <taxon>Bacillus cereus group</taxon>
    </lineage>
</organism>
<accession>B7HQT2</accession>
<reference key="1">
    <citation type="submission" date="2008-10" db="EMBL/GenBank/DDBJ databases">
        <title>Genome sequence of Bacillus cereus AH187.</title>
        <authorList>
            <person name="Dodson R.J."/>
            <person name="Durkin A.S."/>
            <person name="Rosovitz M.J."/>
            <person name="Rasko D.A."/>
            <person name="Kolsto A.B."/>
            <person name="Okstad O.A."/>
            <person name="Ravel J."/>
            <person name="Sutton G."/>
        </authorList>
    </citation>
    <scope>NUCLEOTIDE SEQUENCE [LARGE SCALE GENOMIC DNA]</scope>
    <source>
        <strain>AH187</strain>
    </source>
</reference>